<protein>
    <recommendedName>
        <fullName>Histone H3-like centromeric protein A</fullName>
    </recommendedName>
    <alternativeName>
        <fullName>Centromere protein A</fullName>
        <shortName>CENP-A</shortName>
    </alternativeName>
</protein>
<organism>
    <name type="scientific">Xenopus laevis</name>
    <name type="common">African clawed frog</name>
    <dbReference type="NCBI Taxonomy" id="8355"/>
    <lineage>
        <taxon>Eukaryota</taxon>
        <taxon>Metazoa</taxon>
        <taxon>Chordata</taxon>
        <taxon>Craniata</taxon>
        <taxon>Vertebrata</taxon>
        <taxon>Euteleostomi</taxon>
        <taxon>Amphibia</taxon>
        <taxon>Batrachia</taxon>
        <taxon>Anura</taxon>
        <taxon>Pipoidea</taxon>
        <taxon>Pipidae</taxon>
        <taxon>Xenopodinae</taxon>
        <taxon>Xenopus</taxon>
        <taxon>Xenopus</taxon>
    </lineage>
</organism>
<feature type="chain" id="PRO_0000249470" description="Histone H3-like centromeric protein A">
    <location>
        <begin position="1"/>
        <end position="150"/>
    </location>
</feature>
<feature type="region of interest" description="Disordered" evidence="2">
    <location>
        <begin position="1"/>
        <end position="55"/>
    </location>
</feature>
<feature type="region of interest" description="H3-like">
    <location>
        <begin position="53"/>
        <end position="150"/>
    </location>
</feature>
<feature type="compositionally biased region" description="Basic residues" evidence="2">
    <location>
        <begin position="41"/>
        <end position="53"/>
    </location>
</feature>
<feature type="splice variant" id="VSP_020431" description="In isoform 2." evidence="5">
    <location>
        <begin position="145"/>
        <end position="149"/>
    </location>
</feature>
<name>CENPA_XENLA</name>
<keyword id="KW-0025">Alternative splicing</keyword>
<keyword id="KW-0137">Centromere</keyword>
<keyword id="KW-0158">Chromosome</keyword>
<keyword id="KW-0238">DNA-binding</keyword>
<keyword id="KW-0544">Nucleosome core</keyword>
<keyword id="KW-0539">Nucleus</keyword>
<keyword id="KW-1185">Reference proteome</keyword>
<comment type="function">
    <text evidence="1">Histone H3-like nucleosomal protein that is specifically found in centromeric nucleosomes. Replaces conventional H3 in the nucleosome core of centromeric chromatin that serves as an assembly site for the inner kinetochore. The presence of CENPA subtly modifies the nucleosome structure and the way DNA is wrapped around the nucleosome and gives rise to protruding DNA ends that are less well-ordered and rigid compared to nucleosomes containing histone H3. May serve as an epigenetic mark that propagates centromere identity through replication and cell division. Required for recruitment and assembly of kinetochore proteins, and as a consequence required for progress through mitosis, chromosome segregation and cytokinesis.</text>
</comment>
<comment type="subunit">
    <text evidence="1">Component of centromeric nucleosomes, where DNA is wrapped around a histone octamer core. The octamer contains two molecules each of H2A, H2B, CENPA and H4 assembled in one CENPA-H4 heterotetramer and two H2A-H2B heterodimers. CENPA modulates the DNA-binding characteristics of nucleosomes so that protruding DNA ends have higher flexibility than in nucleosomes containing conventional histone H3.</text>
</comment>
<comment type="subcellular location">
    <subcellularLocation>
        <location evidence="4">Nucleus</location>
    </subcellularLocation>
    <subcellularLocation>
        <location evidence="3 4">Chromosome</location>
        <location evidence="3 4">Centromere</location>
    </subcellularLocation>
    <text evidence="1">Localizes exclusively to sites of kinetochore assembly in centromeres. Occupies a compact domain at the inner kinetochore plate stretching across 2 thirds of the length of the constriction but encompassing only one third of the constriction width and height.</text>
</comment>
<comment type="alternative products">
    <event type="alternative splicing"/>
    <isoform>
        <id>Q569M3-1</id>
        <name>1</name>
        <sequence type="displayed"/>
    </isoform>
    <isoform>
        <id>Q569M3-2</id>
        <name>2</name>
        <sequence type="described" ref="VSP_020431"/>
    </isoform>
</comment>
<comment type="similarity">
    <text evidence="6">Belongs to the histone H3 family.</text>
</comment>
<proteinExistence type="evidence at transcript level"/>
<reference key="1">
    <citation type="journal article" date="2005" name="Mol. Biol. Cell">
        <title>Identification of Xenopus CENP-A and an associated centromeric DNA repeat.</title>
        <authorList>
            <person name="Edwards N.S."/>
            <person name="Murray A.W."/>
        </authorList>
    </citation>
    <scope>NUCLEOTIDE SEQUENCE [MRNA] (ISOFORM 2)</scope>
    <scope>SUBCELLULAR LOCATION</scope>
</reference>
<reference key="2">
    <citation type="submission" date="2005-04" db="EMBL/GenBank/DDBJ databases">
        <authorList>
            <consortium name="NIH - Xenopus Gene Collection (XGC) project"/>
        </authorList>
    </citation>
    <scope>NUCLEOTIDE SEQUENCE [LARGE SCALE MRNA] (ISOFORM 1)</scope>
    <source>
        <tissue>Egg</tissue>
    </source>
</reference>
<reference key="3">
    <citation type="journal article" date="2005" name="DNA Repair">
        <title>Xenopus CENP-A assembly into chromatin requires base excision repair proteins.</title>
        <authorList>
            <person name="Zeitlin S.G."/>
            <person name="Patel S."/>
            <person name="Kavli B."/>
            <person name="Slupphaug G."/>
        </authorList>
    </citation>
    <scope>SUBCELLULAR LOCATION</scope>
</reference>
<gene>
    <name type="primary">cenpa</name>
</gene>
<evidence type="ECO:0000250" key="1">
    <source>
        <dbReference type="UniProtKB" id="P49450"/>
    </source>
</evidence>
<evidence type="ECO:0000256" key="2">
    <source>
        <dbReference type="SAM" id="MobiDB-lite"/>
    </source>
</evidence>
<evidence type="ECO:0000269" key="3">
    <source>
    </source>
</evidence>
<evidence type="ECO:0000269" key="4">
    <source>
    </source>
</evidence>
<evidence type="ECO:0000303" key="5">
    <source>
    </source>
</evidence>
<evidence type="ECO:0000305" key="6"/>
<dbReference type="EMBL" id="BC092389">
    <property type="protein sequence ID" value="AAH92389.1"/>
    <property type="molecule type" value="mRNA"/>
</dbReference>
<dbReference type="RefSeq" id="NP_001090007.1">
    <molecule id="Q569M3-1"/>
    <property type="nucleotide sequence ID" value="NM_001096538.1"/>
</dbReference>
<dbReference type="SMR" id="Q569M3"/>
<dbReference type="BioGRID" id="592860">
    <property type="interactions" value="1"/>
</dbReference>
<dbReference type="IntAct" id="Q569M3">
    <property type="interactions" value="1"/>
</dbReference>
<dbReference type="DNASU" id="735079"/>
<dbReference type="GeneID" id="735079"/>
<dbReference type="KEGG" id="xla:735079"/>
<dbReference type="AGR" id="Xenbase:XB-GENE-865062"/>
<dbReference type="CTD" id="735079"/>
<dbReference type="Xenbase" id="XB-GENE-865062">
    <property type="gene designation" value="cenpa.L"/>
</dbReference>
<dbReference type="OMA" id="LKFVPHG"/>
<dbReference type="OrthoDB" id="842664at2759"/>
<dbReference type="Proteomes" id="UP000186698">
    <property type="component" value="Chromosome 8L"/>
</dbReference>
<dbReference type="Bgee" id="735079">
    <property type="expression patterns" value="Expressed in egg cell and 19 other cell types or tissues"/>
</dbReference>
<dbReference type="GO" id="GO:0000775">
    <property type="term" value="C:chromosome, centromeric region"/>
    <property type="evidence" value="ECO:0007669"/>
    <property type="project" value="UniProtKB-SubCell"/>
</dbReference>
<dbReference type="GO" id="GO:0000786">
    <property type="term" value="C:nucleosome"/>
    <property type="evidence" value="ECO:0007669"/>
    <property type="project" value="UniProtKB-KW"/>
</dbReference>
<dbReference type="GO" id="GO:0005634">
    <property type="term" value="C:nucleus"/>
    <property type="evidence" value="ECO:0007669"/>
    <property type="project" value="UniProtKB-SubCell"/>
</dbReference>
<dbReference type="GO" id="GO:0003677">
    <property type="term" value="F:DNA binding"/>
    <property type="evidence" value="ECO:0007669"/>
    <property type="project" value="UniProtKB-KW"/>
</dbReference>
<dbReference type="GO" id="GO:0046982">
    <property type="term" value="F:protein heterodimerization activity"/>
    <property type="evidence" value="ECO:0007669"/>
    <property type="project" value="InterPro"/>
</dbReference>
<dbReference type="GO" id="GO:0030527">
    <property type="term" value="F:structural constituent of chromatin"/>
    <property type="evidence" value="ECO:0007669"/>
    <property type="project" value="InterPro"/>
</dbReference>
<dbReference type="CDD" id="cd22911">
    <property type="entry name" value="HFD_H3"/>
    <property type="match status" value="1"/>
</dbReference>
<dbReference type="FunFam" id="1.10.20.10:FF:000205">
    <property type="match status" value="1"/>
</dbReference>
<dbReference type="Gene3D" id="1.10.20.10">
    <property type="entry name" value="Histone, subunit A"/>
    <property type="match status" value="1"/>
</dbReference>
<dbReference type="InterPro" id="IPR009072">
    <property type="entry name" value="Histone-fold"/>
</dbReference>
<dbReference type="InterPro" id="IPR007125">
    <property type="entry name" value="Histone_H2A/H2B/H3"/>
</dbReference>
<dbReference type="InterPro" id="IPR000164">
    <property type="entry name" value="Histone_H3/CENP-A"/>
</dbReference>
<dbReference type="PANTHER" id="PTHR45810:SF17">
    <property type="entry name" value="HISTONE H3-LIKE CENTROMERIC PROTEIN A"/>
    <property type="match status" value="1"/>
</dbReference>
<dbReference type="PANTHER" id="PTHR45810">
    <property type="entry name" value="HISTONE H3.2"/>
    <property type="match status" value="1"/>
</dbReference>
<dbReference type="Pfam" id="PF00125">
    <property type="entry name" value="Histone"/>
    <property type="match status" value="1"/>
</dbReference>
<dbReference type="PRINTS" id="PR00622">
    <property type="entry name" value="HISTONEH3"/>
</dbReference>
<dbReference type="SMART" id="SM00428">
    <property type="entry name" value="H3"/>
    <property type="match status" value="1"/>
</dbReference>
<dbReference type="SUPFAM" id="SSF47113">
    <property type="entry name" value="Histone-fold"/>
    <property type="match status" value="1"/>
</dbReference>
<dbReference type="PROSITE" id="PS00959">
    <property type="entry name" value="HISTONE_H3_2"/>
    <property type="match status" value="1"/>
</dbReference>
<sequence>MRPGSTPPSRRKSRPPRRVSPPLPTTSRTSPRRPHAQQQRRASRASPKKRFRPGTRALMEIRKYQKSTELLIRKAPFSRLVREVCMTYACGMNYNWQSMALMALQEASEAFLVRLFEDSYLCSLHAKRVTLYVQDIQLARRIRGVNEGLG</sequence>
<accession>Q569M3</accession>